<proteinExistence type="evidence at transcript level"/>
<protein>
    <recommendedName>
        <fullName>Interferon-induced GTP-binding protein Mx2</fullName>
        <shortName evidence="6 8">RBTMx2</shortName>
    </recommendedName>
</protein>
<reference evidence="7 8" key="1">
    <citation type="journal article" date="1997" name="J. Virol.">
        <title>Cloning of the rainbow trout (Oncorhynchus mykiss) Mx2 and Mx3 cDNAs and characterization of trout Mx protein expression in salmon cells.</title>
        <authorList>
            <person name="Trobridge G.D."/>
            <person name="Chiou P.P."/>
            <person name="Leong J.A."/>
        </authorList>
    </citation>
    <scope>NUCLEOTIDE SEQUENCE [MRNA]</scope>
    <scope>FUNCTION</scope>
    <scope>SUBCELLULAR LOCATION</scope>
</reference>
<reference evidence="7" key="2">
    <citation type="journal article" date="2007" name="Fish Shellfish Immunol.">
        <title>In vitro and in vivo differential expression of rainbow trout (Oncorhynchus mykiss) Mx isoforms in response to viral haemorrhagic septicaemia virus (VHSV) G gene, poly I:C and VHSV.</title>
        <authorList>
            <person name="Tafalla C."/>
            <person name="Chico V."/>
            <person name="Perez L."/>
            <person name="Coll J.M."/>
            <person name="Estepa A."/>
        </authorList>
    </citation>
    <scope>INDUCTION</scope>
</reference>
<comment type="function">
    <text evidence="5">Does not inhibit strain RB-1 of the fish pathogen, infectious hematopoietic necrosis virus (IHNV).</text>
</comment>
<comment type="subcellular location">
    <subcellularLocation>
        <location evidence="5">Nucleus</location>
    </subcellularLocation>
    <subcellularLocation>
        <location evidence="5">Cytoplasm</location>
    </subcellularLocation>
    <text evidence="5">Displays highly punctate staining of the nucleus. In some cells, punctate staining is observed in both nucleus and cytoplasm.</text>
</comment>
<comment type="induction">
    <text evidence="4">By polyinosinic-polycytidylic acid (poly I:C) and viral haemorrhagic septicaemia virus (VHSV) strain 07.71 in muscle, head kidney, spleen and liver.</text>
</comment>
<comment type="similarity">
    <text evidence="3">Belongs to the TRAFAC class dynamin-like GTPase superfamily. Dynamin/Fzo/YdjA family.</text>
</comment>
<name>MX2_ONCMY</name>
<keyword id="KW-0963">Cytoplasm</keyword>
<keyword id="KW-0342">GTP-binding</keyword>
<keyword id="KW-0547">Nucleotide-binding</keyword>
<keyword id="KW-0539">Nucleus</keyword>
<sequence length="635" mass="72113">MNYTLNQHYEEKVRPSIDLIDSLRSLGVEKDLALPAIAVIGDQSSGKSSVLEALSGVALPRGSGIVTRCPLELKMKRKKEGEEWHGKISYQDREEEIEDPSDVENKIRKAQDEMAGVGVGISDDLISLEIGSPDVPDLTLIDLPGIARVAVKGQPENIGEQIKRLIRKFITKQETINLVVVPCNVDIATTEALKMAQEVDPDGERTLGILTKPDLVDKGTEETVVDIVHNEVIQLTKGYMIVKCRGQKEIMERVSLTEATEREKAFFKEHAHLSTLYDEGHATIPKLAEKLTLELVQHIEKSMPRLKEQIEEKLEETRTALEKCGTGPPEDPKERLYFLIDKVTLFTQDAINLSTGEELKSGDINVFSTLRTEFGKWKAYVDRSGKNFNKKIEKEVADYEKRYRGRELPGFINYKTFEVIVKDQIKQLEEPAVKKLKELSDAARKAFILLAQNSFTGFPILLKTAKTKIETIKQEKESTAESTLRTQFKMELIVYTQDSTYSSSLKKRKREEEELEEGELVKNNLGSWKGLPVVSVRSTVNGLDTHATLREMMLHLKSYYHIASQRLADQIPMVIRYLVLQEFASQLQREMLQTLQEKDNIEQLLKEDIDIGSKRAALQSKLKRLMKAHNYLVEF</sequence>
<dbReference type="EMBL" id="U47945">
    <property type="protein sequence ID" value="AAC60214.1"/>
    <property type="molecule type" value="mRNA"/>
</dbReference>
<dbReference type="RefSeq" id="NP_001118223.1">
    <property type="nucleotide sequence ID" value="NM_001124751.1"/>
</dbReference>
<dbReference type="SMR" id="Q91196"/>
<dbReference type="GeneID" id="100137062"/>
<dbReference type="KEGG" id="omy:100137062"/>
<dbReference type="CTD" id="4600"/>
<dbReference type="OrthoDB" id="5061070at2759"/>
<dbReference type="Proteomes" id="UP000694395">
    <property type="component" value="Unplaced"/>
</dbReference>
<dbReference type="GO" id="GO:0005829">
    <property type="term" value="C:cytosol"/>
    <property type="evidence" value="ECO:0000315"/>
    <property type="project" value="AgBase"/>
</dbReference>
<dbReference type="GO" id="GO:0005874">
    <property type="term" value="C:microtubule"/>
    <property type="evidence" value="ECO:0007669"/>
    <property type="project" value="TreeGrafter"/>
</dbReference>
<dbReference type="GO" id="GO:0005634">
    <property type="term" value="C:nucleus"/>
    <property type="evidence" value="ECO:0000315"/>
    <property type="project" value="AgBase"/>
</dbReference>
<dbReference type="GO" id="GO:0005886">
    <property type="term" value="C:plasma membrane"/>
    <property type="evidence" value="ECO:0007669"/>
    <property type="project" value="TreeGrafter"/>
</dbReference>
<dbReference type="GO" id="GO:0098793">
    <property type="term" value="C:presynapse"/>
    <property type="evidence" value="ECO:0007669"/>
    <property type="project" value="GOC"/>
</dbReference>
<dbReference type="GO" id="GO:0005525">
    <property type="term" value="F:GTP binding"/>
    <property type="evidence" value="ECO:0007669"/>
    <property type="project" value="UniProtKB-KW"/>
</dbReference>
<dbReference type="GO" id="GO:0003924">
    <property type="term" value="F:GTPase activity"/>
    <property type="evidence" value="ECO:0007669"/>
    <property type="project" value="InterPro"/>
</dbReference>
<dbReference type="GO" id="GO:0008017">
    <property type="term" value="F:microtubule binding"/>
    <property type="evidence" value="ECO:0007669"/>
    <property type="project" value="TreeGrafter"/>
</dbReference>
<dbReference type="GO" id="GO:0051607">
    <property type="term" value="P:defense response to virus"/>
    <property type="evidence" value="ECO:0007669"/>
    <property type="project" value="TreeGrafter"/>
</dbReference>
<dbReference type="GO" id="GO:0031623">
    <property type="term" value="P:receptor internalization"/>
    <property type="evidence" value="ECO:0007669"/>
    <property type="project" value="TreeGrafter"/>
</dbReference>
<dbReference type="GO" id="GO:0034340">
    <property type="term" value="P:response to type I interferon"/>
    <property type="evidence" value="ECO:0000250"/>
    <property type="project" value="AgBase"/>
</dbReference>
<dbReference type="GO" id="GO:0016185">
    <property type="term" value="P:synaptic vesicle budding from presynaptic endocytic zone membrane"/>
    <property type="evidence" value="ECO:0007669"/>
    <property type="project" value="TreeGrafter"/>
</dbReference>
<dbReference type="CDD" id="cd08771">
    <property type="entry name" value="DLP_1"/>
    <property type="match status" value="1"/>
</dbReference>
<dbReference type="FunFam" id="1.20.120.1240:FF:000007">
    <property type="entry name" value="Interferon-induced GTP-binding protein Mx1"/>
    <property type="match status" value="1"/>
</dbReference>
<dbReference type="FunFam" id="3.40.50.300:FF:000621">
    <property type="entry name" value="Interferon-induced GTP-binding protein Mx1"/>
    <property type="match status" value="1"/>
</dbReference>
<dbReference type="Gene3D" id="1.20.120.1240">
    <property type="entry name" value="Dynamin, middle domain"/>
    <property type="match status" value="1"/>
</dbReference>
<dbReference type="Gene3D" id="3.40.50.300">
    <property type="entry name" value="P-loop containing nucleotide triphosphate hydrolases"/>
    <property type="match status" value="1"/>
</dbReference>
<dbReference type="InterPro" id="IPR022812">
    <property type="entry name" value="Dynamin"/>
</dbReference>
<dbReference type="InterPro" id="IPR001401">
    <property type="entry name" value="Dynamin_GTPase"/>
</dbReference>
<dbReference type="InterPro" id="IPR019762">
    <property type="entry name" value="Dynamin_GTPase_CS"/>
</dbReference>
<dbReference type="InterPro" id="IPR045063">
    <property type="entry name" value="Dynamin_N"/>
</dbReference>
<dbReference type="InterPro" id="IPR000375">
    <property type="entry name" value="Dynamin_stalk"/>
</dbReference>
<dbReference type="InterPro" id="IPR030381">
    <property type="entry name" value="G_DYNAMIN_dom"/>
</dbReference>
<dbReference type="InterPro" id="IPR003130">
    <property type="entry name" value="GED"/>
</dbReference>
<dbReference type="InterPro" id="IPR020850">
    <property type="entry name" value="GED_dom"/>
</dbReference>
<dbReference type="InterPro" id="IPR027417">
    <property type="entry name" value="P-loop_NTPase"/>
</dbReference>
<dbReference type="PANTHER" id="PTHR11566">
    <property type="entry name" value="DYNAMIN"/>
    <property type="match status" value="1"/>
</dbReference>
<dbReference type="PANTHER" id="PTHR11566:SF225">
    <property type="entry name" value="INTERFERON-INDUCED GTP-BINDING PROTEIN MX-RELATED"/>
    <property type="match status" value="1"/>
</dbReference>
<dbReference type="Pfam" id="PF01031">
    <property type="entry name" value="Dynamin_M"/>
    <property type="match status" value="1"/>
</dbReference>
<dbReference type="Pfam" id="PF00350">
    <property type="entry name" value="Dynamin_N"/>
    <property type="match status" value="1"/>
</dbReference>
<dbReference type="Pfam" id="PF02212">
    <property type="entry name" value="GED"/>
    <property type="match status" value="1"/>
</dbReference>
<dbReference type="PRINTS" id="PR00195">
    <property type="entry name" value="DYNAMIN"/>
</dbReference>
<dbReference type="SMART" id="SM00053">
    <property type="entry name" value="DYNc"/>
    <property type="match status" value="1"/>
</dbReference>
<dbReference type="SMART" id="SM00302">
    <property type="entry name" value="GED"/>
    <property type="match status" value="1"/>
</dbReference>
<dbReference type="SUPFAM" id="SSF52540">
    <property type="entry name" value="P-loop containing nucleoside triphosphate hydrolases"/>
    <property type="match status" value="1"/>
</dbReference>
<dbReference type="PROSITE" id="PS00410">
    <property type="entry name" value="G_DYNAMIN_1"/>
    <property type="match status" value="1"/>
</dbReference>
<dbReference type="PROSITE" id="PS51718">
    <property type="entry name" value="G_DYNAMIN_2"/>
    <property type="match status" value="1"/>
</dbReference>
<dbReference type="PROSITE" id="PS51388">
    <property type="entry name" value="GED"/>
    <property type="match status" value="1"/>
</dbReference>
<feature type="chain" id="PRO_0000430325" description="Interferon-induced GTP-binding protein Mx2">
    <location>
        <begin position="1"/>
        <end position="635"/>
    </location>
</feature>
<feature type="domain" description="Dynamin-type G" evidence="3">
    <location>
        <begin position="31"/>
        <end position="304"/>
    </location>
</feature>
<feature type="domain" description="GED" evidence="2">
    <location>
        <begin position="549"/>
        <end position="635"/>
    </location>
</feature>
<feature type="region of interest" description="G1 motif" evidence="3">
    <location>
        <begin position="41"/>
        <end position="48"/>
    </location>
</feature>
<feature type="region of interest" description="G2 motif" evidence="3">
    <location>
        <begin position="66"/>
        <end position="68"/>
    </location>
</feature>
<feature type="region of interest" description="G3 motif" evidence="3">
    <location>
        <begin position="142"/>
        <end position="145"/>
    </location>
</feature>
<feature type="region of interest" description="G4 motif" evidence="3">
    <location>
        <begin position="211"/>
        <end position="214"/>
    </location>
</feature>
<feature type="region of interest" description="G5 motif" evidence="3">
    <location>
        <begin position="243"/>
        <end position="246"/>
    </location>
</feature>
<feature type="binding site" evidence="1">
    <location>
        <begin position="41"/>
        <end position="48"/>
    </location>
    <ligand>
        <name>GTP</name>
        <dbReference type="ChEBI" id="CHEBI:37565"/>
    </ligand>
</feature>
<feature type="binding site" evidence="1">
    <location>
        <begin position="142"/>
        <end position="146"/>
    </location>
    <ligand>
        <name>GTP</name>
        <dbReference type="ChEBI" id="CHEBI:37565"/>
    </ligand>
</feature>
<feature type="binding site" evidence="1">
    <location>
        <begin position="211"/>
        <end position="214"/>
    </location>
    <ligand>
        <name>GTP</name>
        <dbReference type="ChEBI" id="CHEBI:37565"/>
    </ligand>
</feature>
<evidence type="ECO:0000255" key="1"/>
<evidence type="ECO:0000255" key="2">
    <source>
        <dbReference type="PROSITE-ProRule" id="PRU00720"/>
    </source>
</evidence>
<evidence type="ECO:0000255" key="3">
    <source>
        <dbReference type="PROSITE-ProRule" id="PRU01055"/>
    </source>
</evidence>
<evidence type="ECO:0000269" key="4">
    <source>
    </source>
</evidence>
<evidence type="ECO:0000269" key="5">
    <source>
    </source>
</evidence>
<evidence type="ECO:0000303" key="6">
    <source>
    </source>
</evidence>
<evidence type="ECO:0000305" key="7"/>
<evidence type="ECO:0000312" key="8">
    <source>
        <dbReference type="EMBL" id="AAC60214.1"/>
    </source>
</evidence>
<organism>
    <name type="scientific">Oncorhynchus mykiss</name>
    <name type="common">Rainbow trout</name>
    <name type="synonym">Salmo gairdneri</name>
    <dbReference type="NCBI Taxonomy" id="8022"/>
    <lineage>
        <taxon>Eukaryota</taxon>
        <taxon>Metazoa</taxon>
        <taxon>Chordata</taxon>
        <taxon>Craniata</taxon>
        <taxon>Vertebrata</taxon>
        <taxon>Euteleostomi</taxon>
        <taxon>Actinopterygii</taxon>
        <taxon>Neopterygii</taxon>
        <taxon>Teleostei</taxon>
        <taxon>Protacanthopterygii</taxon>
        <taxon>Salmoniformes</taxon>
        <taxon>Salmonidae</taxon>
        <taxon>Salmoninae</taxon>
        <taxon>Oncorhynchus</taxon>
    </lineage>
</organism>
<accession>Q91196</accession>
<gene>
    <name evidence="6" type="primary">mx2</name>
</gene>